<organism>
    <name type="scientific">Staphylococcus saprophyticus subsp. saprophyticus (strain ATCC 15305 / DSM 20229 / NCIMB 8711 / NCTC 7292 / S-41)</name>
    <dbReference type="NCBI Taxonomy" id="342451"/>
    <lineage>
        <taxon>Bacteria</taxon>
        <taxon>Bacillati</taxon>
        <taxon>Bacillota</taxon>
        <taxon>Bacilli</taxon>
        <taxon>Bacillales</taxon>
        <taxon>Staphylococcaceae</taxon>
        <taxon>Staphylococcus</taxon>
    </lineage>
</organism>
<gene>
    <name type="ordered locus">SSP0535</name>
</gene>
<evidence type="ECO:0000255" key="1">
    <source>
        <dbReference type="PROSITE-ProRule" id="PRU00303"/>
    </source>
</evidence>
<evidence type="ECO:0000256" key="2">
    <source>
        <dbReference type="SAM" id="MobiDB-lite"/>
    </source>
</evidence>
<feature type="signal peptide" evidence="1">
    <location>
        <begin position="1"/>
        <end position="17"/>
    </location>
</feature>
<feature type="chain" id="PRO_0000296185" description="Uncharacterized lipoprotein SSP0535">
    <location>
        <begin position="18"/>
        <end position="274"/>
    </location>
</feature>
<feature type="region of interest" description="Disordered" evidence="2">
    <location>
        <begin position="18"/>
        <end position="169"/>
    </location>
</feature>
<feature type="compositionally biased region" description="Basic and acidic residues" evidence="2">
    <location>
        <begin position="25"/>
        <end position="76"/>
    </location>
</feature>
<feature type="compositionally biased region" description="Low complexity" evidence="2">
    <location>
        <begin position="91"/>
        <end position="169"/>
    </location>
</feature>
<feature type="lipid moiety-binding region" description="N-palmitoyl cysteine" evidence="1">
    <location>
        <position position="18"/>
    </location>
</feature>
<feature type="lipid moiety-binding region" description="S-diacylglycerol cysteine" evidence="1">
    <location>
        <position position="18"/>
    </location>
</feature>
<protein>
    <recommendedName>
        <fullName>Uncharacterized lipoprotein SSP0535</fullName>
    </recommendedName>
</protein>
<accession>Q49ZU4</accession>
<proteinExistence type="inferred from homology"/>
<dbReference type="EMBL" id="AP008934">
    <property type="protein sequence ID" value="BAE17680.1"/>
    <property type="molecule type" value="Genomic_DNA"/>
</dbReference>
<dbReference type="RefSeq" id="WP_011302487.1">
    <property type="nucleotide sequence ID" value="NZ_MTGA01000036.1"/>
</dbReference>
<dbReference type="GeneID" id="3615001"/>
<dbReference type="KEGG" id="ssp:SSP0535"/>
<dbReference type="PATRIC" id="fig|342451.11.peg.539"/>
<dbReference type="eggNOG" id="ENOG5030EVE">
    <property type="taxonomic scope" value="Bacteria"/>
</dbReference>
<dbReference type="HOGENOM" id="CLU_088585_0_0_9"/>
<dbReference type="OrthoDB" id="2414075at2"/>
<dbReference type="Proteomes" id="UP000006371">
    <property type="component" value="Chromosome"/>
</dbReference>
<dbReference type="GO" id="GO:0005886">
    <property type="term" value="C:plasma membrane"/>
    <property type="evidence" value="ECO:0007669"/>
    <property type="project" value="UniProtKB-SubCell"/>
</dbReference>
<dbReference type="PROSITE" id="PS51257">
    <property type="entry name" value="PROKAR_LIPOPROTEIN"/>
    <property type="match status" value="1"/>
</dbReference>
<comment type="subcellular location">
    <subcellularLocation>
        <location evidence="1">Cell membrane</location>
        <topology evidence="1">Lipid-anchor</topology>
    </subcellularLocation>
</comment>
<name>Y535_STAS1</name>
<sequence>MKKLLAGFLTLSLALAACSNGSDDDSSKKDDSSKDNQSSDDKSKDSKNDDKKNNDSDKDKDNNSDSDKNSDSKSDDSSSSDRNNGDDENSSDNASGSDSSSSNNDSNANSDGSSSNADGDNASGNNDNANNATSSESNGNENGAMNDANGSNSNDNASADANNGASSANTSQYVAPYQGQNAVPVAQNITSGTPDSQAALQNLPNFQNALDNATTEVNGLNGQSNPYNDYAIEGSEGNYSYIFSFQNQAQPGTYTIATVDQQGTVRVVDPAYQQ</sequence>
<keyword id="KW-1003">Cell membrane</keyword>
<keyword id="KW-0449">Lipoprotein</keyword>
<keyword id="KW-0472">Membrane</keyword>
<keyword id="KW-0564">Palmitate</keyword>
<keyword id="KW-1185">Reference proteome</keyword>
<keyword id="KW-0732">Signal</keyword>
<reference key="1">
    <citation type="journal article" date="2005" name="Proc. Natl. Acad. Sci. U.S.A.">
        <title>Whole genome sequence of Staphylococcus saprophyticus reveals the pathogenesis of uncomplicated urinary tract infection.</title>
        <authorList>
            <person name="Kuroda M."/>
            <person name="Yamashita A."/>
            <person name="Hirakawa H."/>
            <person name="Kumano M."/>
            <person name="Morikawa K."/>
            <person name="Higashide M."/>
            <person name="Maruyama A."/>
            <person name="Inose Y."/>
            <person name="Matoba K."/>
            <person name="Toh H."/>
            <person name="Kuhara S."/>
            <person name="Hattori M."/>
            <person name="Ohta T."/>
        </authorList>
    </citation>
    <scope>NUCLEOTIDE SEQUENCE [LARGE SCALE GENOMIC DNA]</scope>
    <source>
        <strain>ATCC 15305 / DSM 20229 / NCIMB 8711 / NCTC 7292 / S-41</strain>
    </source>
</reference>